<proteinExistence type="inferred from homology"/>
<organism>
    <name type="scientific">Aspergillus fumigatus (strain ATCC MYA-4609 / CBS 101355 / FGSC A1100 / Af293)</name>
    <name type="common">Neosartorya fumigata</name>
    <dbReference type="NCBI Taxonomy" id="330879"/>
    <lineage>
        <taxon>Eukaryota</taxon>
        <taxon>Fungi</taxon>
        <taxon>Dikarya</taxon>
        <taxon>Ascomycota</taxon>
        <taxon>Pezizomycotina</taxon>
        <taxon>Eurotiomycetes</taxon>
        <taxon>Eurotiomycetidae</taxon>
        <taxon>Eurotiales</taxon>
        <taxon>Aspergillaceae</taxon>
        <taxon>Aspergillus</taxon>
        <taxon>Aspergillus subgen. Fumigati</taxon>
    </lineage>
</organism>
<comment type="function">
    <text evidence="1">RNA-binding component of the cleavage and polyadenylation factor (CPF) complex, which plays a key role in polyadenylation-dependent pre-mRNA 3'-end formation and cooperates with cleavage factors including the CFIA complex and NAB4/CFIB. Involved in poly(A) site recognition. May be involved in coupling transcription termination and mRNA 3'-end formation (By similarity).</text>
</comment>
<comment type="subcellular location">
    <subcellularLocation>
        <location evidence="1">Nucleus</location>
    </subcellularLocation>
</comment>
<comment type="similarity">
    <text evidence="3">Belongs to the CFT1 family.</text>
</comment>
<accession>Q4WCL1</accession>
<name>CFT1_ASPFU</name>
<dbReference type="EMBL" id="AAHF01000013">
    <property type="protein sequence ID" value="EAL85173.2"/>
    <property type="molecule type" value="Genomic_DNA"/>
</dbReference>
<dbReference type="RefSeq" id="XP_747211.2">
    <property type="nucleotide sequence ID" value="XM_742118.2"/>
</dbReference>
<dbReference type="SMR" id="Q4WCL1"/>
<dbReference type="FunCoup" id="Q4WCL1">
    <property type="interactions" value="1118"/>
</dbReference>
<dbReference type="STRING" id="330879.Q4WCL1"/>
<dbReference type="EnsemblFungi" id="EAL85173">
    <property type="protein sequence ID" value="EAL85173"/>
    <property type="gene ID" value="AFUA_8G04040"/>
</dbReference>
<dbReference type="GeneID" id="3504725"/>
<dbReference type="KEGG" id="afm:AFUA_8G04040"/>
<dbReference type="eggNOG" id="KOG1896">
    <property type="taxonomic scope" value="Eukaryota"/>
</dbReference>
<dbReference type="HOGENOM" id="CLU_002414_2_1_1"/>
<dbReference type="InParanoid" id="Q4WCL1"/>
<dbReference type="OMA" id="PMTKFKL"/>
<dbReference type="OrthoDB" id="6109at2759"/>
<dbReference type="Proteomes" id="UP000002530">
    <property type="component" value="Chromosome 8"/>
</dbReference>
<dbReference type="GO" id="GO:0005847">
    <property type="term" value="C:mRNA cleavage and polyadenylation specificity factor complex"/>
    <property type="evidence" value="ECO:0000318"/>
    <property type="project" value="GO_Central"/>
</dbReference>
<dbReference type="GO" id="GO:0005634">
    <property type="term" value="C:nucleus"/>
    <property type="evidence" value="ECO:0000318"/>
    <property type="project" value="GO_Central"/>
</dbReference>
<dbReference type="GO" id="GO:0003723">
    <property type="term" value="F:RNA binding"/>
    <property type="evidence" value="ECO:0007669"/>
    <property type="project" value="UniProtKB-KW"/>
</dbReference>
<dbReference type="GO" id="GO:0006397">
    <property type="term" value="P:mRNA processing"/>
    <property type="evidence" value="ECO:0007669"/>
    <property type="project" value="UniProtKB-KW"/>
</dbReference>
<dbReference type="FunFam" id="2.130.10.10:FF:000625">
    <property type="entry name" value="mRNA cleavage and polyadenylation factor subunit"/>
    <property type="match status" value="1"/>
</dbReference>
<dbReference type="FunFam" id="2.130.10.10:FF:000788">
    <property type="entry name" value="mRNA cleavage and polyadenylation factor subunit"/>
    <property type="match status" value="1"/>
</dbReference>
<dbReference type="Gene3D" id="1.10.150.910">
    <property type="match status" value="1"/>
</dbReference>
<dbReference type="Gene3D" id="2.130.10.10">
    <property type="entry name" value="YVTN repeat-like/Quinoprotein amine dehydrogenase"/>
    <property type="match status" value="2"/>
</dbReference>
<dbReference type="InterPro" id="IPR018846">
    <property type="entry name" value="Beta-prop_RSE1/DDB1/CPSF1_1st"/>
</dbReference>
<dbReference type="InterPro" id="IPR004871">
    <property type="entry name" value="Cleavage/polyA-sp_fac_asu_C"/>
</dbReference>
<dbReference type="InterPro" id="IPR050358">
    <property type="entry name" value="RSE1/DDB1/CFT1/CPSF1"/>
</dbReference>
<dbReference type="InterPro" id="IPR015943">
    <property type="entry name" value="WD40/YVTN_repeat-like_dom_sf"/>
</dbReference>
<dbReference type="PANTHER" id="PTHR10644">
    <property type="entry name" value="DNA REPAIR/RNA PROCESSING CPSF FAMILY"/>
    <property type="match status" value="1"/>
</dbReference>
<dbReference type="Pfam" id="PF10433">
    <property type="entry name" value="Beta-prop_RSE1_1st"/>
    <property type="match status" value="1"/>
</dbReference>
<dbReference type="Pfam" id="PF03178">
    <property type="entry name" value="CPSF_A"/>
    <property type="match status" value="1"/>
</dbReference>
<reference key="1">
    <citation type="journal article" date="2005" name="Nature">
        <title>Genomic sequence of the pathogenic and allergenic filamentous fungus Aspergillus fumigatus.</title>
        <authorList>
            <person name="Nierman W.C."/>
            <person name="Pain A."/>
            <person name="Anderson M.J."/>
            <person name="Wortman J.R."/>
            <person name="Kim H.S."/>
            <person name="Arroyo J."/>
            <person name="Berriman M."/>
            <person name="Abe K."/>
            <person name="Archer D.B."/>
            <person name="Bermejo C."/>
            <person name="Bennett J.W."/>
            <person name="Bowyer P."/>
            <person name="Chen D."/>
            <person name="Collins M."/>
            <person name="Coulsen R."/>
            <person name="Davies R."/>
            <person name="Dyer P.S."/>
            <person name="Farman M.L."/>
            <person name="Fedorova N."/>
            <person name="Fedorova N.D."/>
            <person name="Feldblyum T.V."/>
            <person name="Fischer R."/>
            <person name="Fosker N."/>
            <person name="Fraser A."/>
            <person name="Garcia J.L."/>
            <person name="Garcia M.J."/>
            <person name="Goble A."/>
            <person name="Goldman G.H."/>
            <person name="Gomi K."/>
            <person name="Griffith-Jones S."/>
            <person name="Gwilliam R."/>
            <person name="Haas B.J."/>
            <person name="Haas H."/>
            <person name="Harris D.E."/>
            <person name="Horiuchi H."/>
            <person name="Huang J."/>
            <person name="Humphray S."/>
            <person name="Jimenez J."/>
            <person name="Keller N."/>
            <person name="Khouri H."/>
            <person name="Kitamoto K."/>
            <person name="Kobayashi T."/>
            <person name="Konzack S."/>
            <person name="Kulkarni R."/>
            <person name="Kumagai T."/>
            <person name="Lafton A."/>
            <person name="Latge J.-P."/>
            <person name="Li W."/>
            <person name="Lord A."/>
            <person name="Lu C."/>
            <person name="Majoros W.H."/>
            <person name="May G.S."/>
            <person name="Miller B.L."/>
            <person name="Mohamoud Y."/>
            <person name="Molina M."/>
            <person name="Monod M."/>
            <person name="Mouyna I."/>
            <person name="Mulligan S."/>
            <person name="Murphy L.D."/>
            <person name="O'Neil S."/>
            <person name="Paulsen I."/>
            <person name="Penalva M.A."/>
            <person name="Pertea M."/>
            <person name="Price C."/>
            <person name="Pritchard B.L."/>
            <person name="Quail M.A."/>
            <person name="Rabbinowitsch E."/>
            <person name="Rawlins N."/>
            <person name="Rajandream M.A."/>
            <person name="Reichard U."/>
            <person name="Renauld H."/>
            <person name="Robson G.D."/>
            <person name="Rodriguez de Cordoba S."/>
            <person name="Rodriguez-Pena J.M."/>
            <person name="Ronning C.M."/>
            <person name="Rutter S."/>
            <person name="Salzberg S.L."/>
            <person name="Sanchez M."/>
            <person name="Sanchez-Ferrero J.C."/>
            <person name="Saunders D."/>
            <person name="Seeger K."/>
            <person name="Squares R."/>
            <person name="Squares S."/>
            <person name="Takeuchi M."/>
            <person name="Tekaia F."/>
            <person name="Turner G."/>
            <person name="Vazquez de Aldana C.R."/>
            <person name="Weidman J."/>
            <person name="White O."/>
            <person name="Woodward J.R."/>
            <person name="Yu J.-H."/>
            <person name="Fraser C.M."/>
            <person name="Galagan J.E."/>
            <person name="Asai K."/>
            <person name="Machida M."/>
            <person name="Hall N."/>
            <person name="Barrell B.G."/>
            <person name="Denning D.W."/>
        </authorList>
    </citation>
    <scope>NUCLEOTIDE SEQUENCE [LARGE SCALE GENOMIC DNA]</scope>
    <source>
        <strain>ATCC MYA-4609 / CBS 101355 / FGSC A1100 / Af293</strain>
    </source>
</reference>
<gene>
    <name type="primary">cft1</name>
    <name type="ORF">AFUA_8G04040</name>
</gene>
<protein>
    <recommendedName>
        <fullName>Protein cft1</fullName>
    </recommendedName>
    <alternativeName>
        <fullName>Cleavage factor two protein 1</fullName>
    </alternativeName>
</protein>
<feature type="chain" id="PRO_0000290622" description="Protein cft1">
    <location>
        <begin position="1"/>
        <end position="1401"/>
    </location>
</feature>
<feature type="region of interest" description="Disordered" evidence="2">
    <location>
        <begin position="434"/>
        <end position="489"/>
    </location>
</feature>
<feature type="compositionally biased region" description="Acidic residues" evidence="2">
    <location>
        <begin position="454"/>
        <end position="474"/>
    </location>
</feature>
<keyword id="KW-0507">mRNA processing</keyword>
<keyword id="KW-0539">Nucleus</keyword>
<keyword id="KW-1185">Reference proteome</keyword>
<keyword id="KW-0694">RNA-binding</keyword>
<evidence type="ECO:0000250" key="1"/>
<evidence type="ECO:0000256" key="2">
    <source>
        <dbReference type="SAM" id="MobiDB-lite"/>
    </source>
</evidence>
<evidence type="ECO:0000305" key="3"/>
<sequence length="1401" mass="154611">MQCYTELLSPSGVTHALAIPFLSASAENLVVVKTSVLQIFSLLKVQHHSRGETIETKSARPDQVETTKLVLEREYPLSGTVVDICRVKILNSKSGGEALLLAFRNAKLSLVEWDPERHGISTISIHYYERDDLTRSPWVPDLSSCGSILSVDPSSRCAVFNFGIRNLAILPFHQPGDDLAMDDYEFHLHQDDLNQVSDHVGNGLKSKDSTVYQTPYASSFVLPLTALDPSILHPVSLAFLYEYREPTFGILYSQIATSHALLSERKDSIFYTVFTLDLEQRASTTLLSVPKLPSDLFKVVALPPPVGGALLIGSNELVHVDQAGKTNAVGVNEFARQVSAFSMVDQSDLALRLEGCVVEHISDSTGDLLLVLSSGNMVLVHFQLDGRSVSGISLRPLPTQAGGTIMKSAASSSAFLGSGRVFFGSEDADSVLLSWSSMPNPKKSRPRMSNVAEDREEASDDSQSEEDAYEDDLYTAEPETPALGRRPSAETTGVGAYIFQTLDRLPNIGPLRDITLGKPASTVENTGRLIKNACSELELVAAQGSGRNGGLVLMKREIEPDVTASFDAQSVQEVWTAVVALGSGAPLVLDEQQINQEYRQYVILSKPETPDKETSEVFIADTQDLKPFRAPEFNPNNDVTIEIGTLSCKKRVVQVLRNEVRSYDIDLGLAQIYPVWDEDTSDERMAVSASLADPYIAILRDDSTLMILQADDSGDLDEVELNEAARAGKWRSCCLYWDKAEFFSSTGPALKQGTRCELFLFLLSIDCRLYVYRLPDQQLISVIEGIDCLPPILSTELPKRSTTREVLSEAVIADLGESWNPSPHLILRTESDDLVIYKAFASYIKGESHTRLSFVKESNHTLPRVTTSEKEMQSNEKLSRPRSLRILPNISNFSAVFMPGRPASFILKTAKSCPHVFRLRGEFVRSLSIFDLASPSLDTGFIYVDSKDVLRICRFPSETLFDYTWALRKISIGEQVDHLAYATSSETYVLGTSHSADFKLPDDDELHPDWRNEGLVISFLPELRQCSLKVVSPRTWTVIDSYSLGPDEYVMAVKNMDLEVSENTHERRNMIVVGTAFARGEDIPSRGCIYVFEVIKVVPDPEKPETDRKLKLIGKELVKGAVTALSQIGGQGFLIAAQGQKCMVRGLKEDGSLLPVAFMDMQCYVNVLKELKGTGMCIMGDAVKGLWFAGYSEEPYKMSLFGKDQGYLEVVAAEFLPDGDKLFILVADSDCNLHVLQYDPEDPKSSNGDRLLARSKFHMGHFATTMTLLPRTMVSSEKAMANPDSMEIDSQTISQQVLITSQSGSVGIVTSVPEESYRRLSALQSQLANSLEHPCGLNPRAYRAVESDGTAGRGMLDGNLLYQWLDMGQHRKMEIAARVGAHEWEIKADLEAIGAEGLGYL</sequence>